<reference evidence="3" key="1">
    <citation type="journal article" date="2009" name="Pestic. Biochem. Physiol.">
        <title>Identification of four novel members of Kunitz-like alpha-amylase inhibitors family from Delonix regia with activity toward Coleopteran insects.</title>
        <authorList>
            <person name="Alves D.T."/>
            <person name="Vasconcelos I.M."/>
            <person name="Oliveira J.T.A."/>
            <person name="Farias L.R."/>
            <person name="Dias S.C."/>
            <person name="Chiarello M.D."/>
            <person name="Maria-Neto S."/>
            <person name="Franco O.L."/>
        </authorList>
    </citation>
    <scope>PROTEIN SEQUENCE</scope>
    <scope>FUNCTION</scope>
    <source>
        <tissue evidence="1">Seed</tissue>
    </source>
</reference>
<name>IAA2_DELRE</name>
<proteinExistence type="evidence at protein level"/>
<sequence length="14" mass="1483">SGGEMSNMGHSMEE</sequence>
<organism>
    <name type="scientific">Delonix regia</name>
    <name type="common">Royal poinciana</name>
    <name type="synonym">Poinciana regia</name>
    <dbReference type="NCBI Taxonomy" id="72433"/>
    <lineage>
        <taxon>Eukaryota</taxon>
        <taxon>Viridiplantae</taxon>
        <taxon>Streptophyta</taxon>
        <taxon>Embryophyta</taxon>
        <taxon>Tracheophyta</taxon>
        <taxon>Spermatophyta</taxon>
        <taxon>Magnoliopsida</taxon>
        <taxon>eudicotyledons</taxon>
        <taxon>Gunneridae</taxon>
        <taxon>Pentapetalae</taxon>
        <taxon>rosids</taxon>
        <taxon>fabids</taxon>
        <taxon>Fabales</taxon>
        <taxon>Fabaceae</taxon>
        <taxon>Caesalpinioideae</taxon>
        <taxon>Peltophorum clade</taxon>
        <taxon>Delonix</taxon>
    </lineage>
</organism>
<feature type="chain" id="PRO_0000389532" description="Alpha-amylase inhibitor DR2">
    <location>
        <begin position="1"/>
        <end position="14" status="greater than"/>
    </location>
</feature>
<feature type="non-terminal residue" evidence="2">
    <location>
        <position position="14"/>
    </location>
</feature>
<dbReference type="GO" id="GO:0015066">
    <property type="term" value="F:alpha-amylase inhibitor activity"/>
    <property type="evidence" value="ECO:0007669"/>
    <property type="project" value="UniProtKB-KW"/>
</dbReference>
<evidence type="ECO:0000269" key="1">
    <source ref="1"/>
</evidence>
<evidence type="ECO:0000303" key="2">
    <source ref="1"/>
</evidence>
<evidence type="ECO:0000305" key="3"/>
<protein>
    <recommendedName>
        <fullName evidence="2">Alpha-amylase inhibitor DR2</fullName>
    </recommendedName>
</protein>
<comment type="function">
    <text evidence="1">Inhibits insect alpha-amylases.</text>
</comment>
<accession>P86365</accession>
<keyword id="KW-0022">Alpha-amylase inhibitor</keyword>
<keyword id="KW-0903">Direct protein sequencing</keyword>